<sequence>MVENSSSNNSTRPIPAIPMDLPDYEALPTHAPLYHQLIAGAFAGIMEHSVMFPIDALKTRIQSANAKSLSAKNMLSQISHISTSEGTLALWKGVQSVILGAGPAHAVYFGTYEFCKKNLIDSSDTQTHHPFKTAISGACATTASDALMNPFDTIKQRIQLNTSASVWQTTKQIYQSEGLAAFYYSYPTTLVMNIPFAAFNFVIYESSTKFLNPSNEYNPLIHCLCGSISGSTCAAITTPLDCIKTVLQIRGSQTVSLEIMRKADTFSKAASAIYQVYGWKGFWRGWKPRIVANMPATAISWTAYECAKHFLMTY</sequence>
<dbReference type="EMBL" id="X56445">
    <property type="protein sequence ID" value="CAA39829.1"/>
    <property type="molecule type" value="Genomic_DNA"/>
</dbReference>
<dbReference type="EMBL" id="X56445">
    <property type="protein sequence ID" value="CAA39830.1"/>
    <property type="status" value="ALT_INIT"/>
    <property type="molecule type" value="Genomic_DNA"/>
</dbReference>
<dbReference type="EMBL" id="X06239">
    <property type="protein sequence ID" value="CAA29582.1"/>
    <property type="status" value="ALT_SEQ"/>
    <property type="molecule type" value="Genomic_DNA"/>
</dbReference>
<dbReference type="EMBL" id="X87371">
    <property type="protein sequence ID" value="CAA60822.1"/>
    <property type="molecule type" value="Genomic_DNA"/>
</dbReference>
<dbReference type="EMBL" id="Z49408">
    <property type="protein sequence ID" value="CAA89428.1"/>
    <property type="molecule type" value="Genomic_DNA"/>
</dbReference>
<dbReference type="EMBL" id="BK006943">
    <property type="protein sequence ID" value="DAA08668.1"/>
    <property type="molecule type" value="Genomic_DNA"/>
</dbReference>
<dbReference type="PIR" id="S55179">
    <property type="entry name" value="S55179"/>
</dbReference>
<dbReference type="RefSeq" id="NP_012402.1">
    <property type="nucleotide sequence ID" value="NM_001181566.1"/>
</dbReference>
<dbReference type="SMR" id="P10566"/>
<dbReference type="BioGRID" id="33623">
    <property type="interactions" value="51"/>
</dbReference>
<dbReference type="DIP" id="DIP-8202N"/>
<dbReference type="FunCoup" id="P10566">
    <property type="interactions" value="757"/>
</dbReference>
<dbReference type="IntAct" id="P10566">
    <property type="interactions" value="4"/>
</dbReference>
<dbReference type="MINT" id="P10566"/>
<dbReference type="STRING" id="4932.YJL133W"/>
<dbReference type="TCDB" id="2.A.29.5.1">
    <property type="family name" value="the mitochondrial carrier (mc) family"/>
</dbReference>
<dbReference type="PaxDb" id="4932-YJL133W"/>
<dbReference type="PeptideAtlas" id="P10566"/>
<dbReference type="EnsemblFungi" id="YJL133W_mRNA">
    <property type="protein sequence ID" value="YJL133W"/>
    <property type="gene ID" value="YJL133W"/>
</dbReference>
<dbReference type="GeneID" id="853308"/>
<dbReference type="KEGG" id="sce:YJL133W"/>
<dbReference type="AGR" id="SGD:S000003669"/>
<dbReference type="SGD" id="S000003669">
    <property type="gene designation" value="MRS3"/>
</dbReference>
<dbReference type="VEuPathDB" id="FungiDB:YJL133W"/>
<dbReference type="eggNOG" id="KOG0760">
    <property type="taxonomic scope" value="Eukaryota"/>
</dbReference>
<dbReference type="GeneTree" id="ENSGT00940000169345"/>
<dbReference type="HOGENOM" id="CLU_015166_3_1_1"/>
<dbReference type="InParanoid" id="P10566"/>
<dbReference type="OMA" id="AYECSKE"/>
<dbReference type="OrthoDB" id="43906at2759"/>
<dbReference type="BioCyc" id="YEAST:G3O-31582-MONOMER"/>
<dbReference type="BioGRID-ORCS" id="853308">
    <property type="hits" value="0 hits in 10 CRISPR screens"/>
</dbReference>
<dbReference type="PRO" id="PR:P10566"/>
<dbReference type="Proteomes" id="UP000002311">
    <property type="component" value="Chromosome X"/>
</dbReference>
<dbReference type="RNAct" id="P10566">
    <property type="molecule type" value="protein"/>
</dbReference>
<dbReference type="GO" id="GO:0005743">
    <property type="term" value="C:mitochondrial inner membrane"/>
    <property type="evidence" value="ECO:0000304"/>
    <property type="project" value="Reactome"/>
</dbReference>
<dbReference type="GO" id="GO:0031966">
    <property type="term" value="C:mitochondrial membrane"/>
    <property type="evidence" value="ECO:0000318"/>
    <property type="project" value="GO_Central"/>
</dbReference>
<dbReference type="GO" id="GO:0005739">
    <property type="term" value="C:mitochondrion"/>
    <property type="evidence" value="ECO:0000314"/>
    <property type="project" value="SGD"/>
</dbReference>
<dbReference type="GO" id="GO:0015093">
    <property type="term" value="F:ferrous iron transmembrane transporter activity"/>
    <property type="evidence" value="ECO:0000269"/>
    <property type="project" value="Reactome"/>
</dbReference>
<dbReference type="GO" id="GO:0005381">
    <property type="term" value="F:iron ion transmembrane transporter activity"/>
    <property type="evidence" value="ECO:0000315"/>
    <property type="project" value="SGD"/>
</dbReference>
<dbReference type="GO" id="GO:0048250">
    <property type="term" value="P:iron import into the mitochondrion"/>
    <property type="evidence" value="ECO:0000314"/>
    <property type="project" value="SGD"/>
</dbReference>
<dbReference type="GO" id="GO:0006397">
    <property type="term" value="P:mRNA processing"/>
    <property type="evidence" value="ECO:0007669"/>
    <property type="project" value="UniProtKB-KW"/>
</dbReference>
<dbReference type="FunFam" id="1.50.40.10:FF:000104">
    <property type="entry name" value="Iron transporter"/>
    <property type="match status" value="1"/>
</dbReference>
<dbReference type="FunFam" id="1.50.40.10:FF:000054">
    <property type="entry name" value="Mitochondrial carrier"/>
    <property type="match status" value="1"/>
</dbReference>
<dbReference type="Gene3D" id="1.50.40.10">
    <property type="entry name" value="Mitochondrial carrier domain"/>
    <property type="match status" value="2"/>
</dbReference>
<dbReference type="InterPro" id="IPR018108">
    <property type="entry name" value="Mitochondrial_sb/sol_carrier"/>
</dbReference>
<dbReference type="InterPro" id="IPR023395">
    <property type="entry name" value="Mt_carrier_dom_sf"/>
</dbReference>
<dbReference type="PANTHER" id="PTHR45758:SF4">
    <property type="entry name" value="MITOFERRIN-1"/>
    <property type="match status" value="1"/>
</dbReference>
<dbReference type="PANTHER" id="PTHR45758">
    <property type="entry name" value="MITOFERRIN-1-RELATED"/>
    <property type="match status" value="1"/>
</dbReference>
<dbReference type="Pfam" id="PF00153">
    <property type="entry name" value="Mito_carr"/>
    <property type="match status" value="3"/>
</dbReference>
<dbReference type="SUPFAM" id="SSF103506">
    <property type="entry name" value="Mitochondrial carrier"/>
    <property type="match status" value="1"/>
</dbReference>
<dbReference type="PROSITE" id="PS50920">
    <property type="entry name" value="SOLCAR"/>
    <property type="match status" value="3"/>
</dbReference>
<comment type="function">
    <text>MRS3 suppresses a mitochondrial splice defect in the first intron of the COB gene. It may act as a carrier, exerting its suppressor activity via modulation of solute concentrations in the mitochondrion (possibly of cations).</text>
</comment>
<comment type="subcellular location">
    <subcellularLocation>
        <location>Mitochondrion inner membrane</location>
        <topology>Multi-pass membrane protein</topology>
    </subcellularLocation>
</comment>
<comment type="miscellaneous">
    <text evidence="2">Present with 1360 molecules/cell in log phase SD medium.</text>
</comment>
<comment type="similarity">
    <text evidence="3">Belongs to the mitochondrial carrier (TC 2.A.29) family.</text>
</comment>
<comment type="sequence caution" evidence="3">
    <conflict type="erroneous initiation">
        <sequence resource="EMBL-CDS" id="CAA39830"/>
    </conflict>
</comment>
<feature type="chain" id="PRO_0000090691" description="Mitochondrial RNA-splicing protein MRS3">
    <location>
        <begin position="1"/>
        <end position="314"/>
    </location>
</feature>
<feature type="transmembrane region" description="Helical; Name=1" evidence="1">
    <location>
        <begin position="33"/>
        <end position="52"/>
    </location>
</feature>
<feature type="transmembrane region" description="Helical; Name=2" evidence="1">
    <location>
        <begin position="93"/>
        <end position="112"/>
    </location>
</feature>
<feature type="transmembrane region" description="Helical; Name=3" evidence="1">
    <location>
        <begin position="130"/>
        <end position="149"/>
    </location>
</feature>
<feature type="transmembrane region" description="Helical; Name=4" evidence="1">
    <location>
        <begin position="185"/>
        <end position="204"/>
    </location>
</feature>
<feature type="transmembrane region" description="Helical; Name=5" evidence="1">
    <location>
        <begin position="219"/>
        <end position="238"/>
    </location>
</feature>
<feature type="transmembrane region" description="Helical; Name=6" evidence="1">
    <location>
        <begin position="285"/>
        <end position="298"/>
    </location>
</feature>
<feature type="repeat" description="Solcar 1">
    <location>
        <begin position="31"/>
        <end position="118"/>
    </location>
</feature>
<feature type="repeat" description="Solcar 2">
    <location>
        <begin position="128"/>
        <end position="210"/>
    </location>
</feature>
<feature type="repeat" description="Solcar 3">
    <location>
        <begin position="217"/>
        <end position="310"/>
    </location>
</feature>
<organism>
    <name type="scientific">Saccharomyces cerevisiae (strain ATCC 204508 / S288c)</name>
    <name type="common">Baker's yeast</name>
    <dbReference type="NCBI Taxonomy" id="559292"/>
    <lineage>
        <taxon>Eukaryota</taxon>
        <taxon>Fungi</taxon>
        <taxon>Dikarya</taxon>
        <taxon>Ascomycota</taxon>
        <taxon>Saccharomycotina</taxon>
        <taxon>Saccharomycetes</taxon>
        <taxon>Saccharomycetales</taxon>
        <taxon>Saccharomycetaceae</taxon>
        <taxon>Saccharomyces</taxon>
    </lineage>
</organism>
<proteinExistence type="evidence at protein level"/>
<accession>P10566</accession>
<accession>D6VW52</accession>
<protein>
    <recommendedName>
        <fullName>Mitochondrial RNA-splicing protein MRS3</fullName>
    </recommendedName>
</protein>
<gene>
    <name type="primary">MRS3</name>
    <name type="ordered locus">YJL133W</name>
    <name type="ORF">J0675</name>
</gene>
<name>MRS3_YEAST</name>
<reference key="1">
    <citation type="journal article" date="1987" name="Mol. Gen. Genet.">
        <title>Nuclear suppression of a mitochondrial RNA splice defect: nucleotide sequence and disruption of the MRS3 gene.</title>
        <authorList>
            <person name="Schmidt C."/>
            <person name="Soellner T."/>
            <person name="Schweyen R.J."/>
        </authorList>
    </citation>
    <scope>NUCLEOTIDE SEQUENCE [GENOMIC DNA]</scope>
    <source>
        <strain>IC8/R101</strain>
    </source>
</reference>
<reference key="2">
    <citation type="journal article" date="1991" name="J. Mol. Biol.">
        <title>MRS3 and MRS4, two suppressors of mtRNA splicing defects in yeast, are new members of the mitochondrial carrier family.</title>
        <authorList>
            <person name="Wiesenberger G."/>
            <person name="Link T.A."/>
            <person name="von Ahsen U."/>
            <person name="Waldherr M."/>
            <person name="Schweyen R.J."/>
        </authorList>
    </citation>
    <scope>NUCLEOTIDE SEQUENCE [GENOMIC DNA]</scope>
    <scope>SEQUENCE REVISION</scope>
    <source>
        <strain>M1301</strain>
    </source>
</reference>
<reference key="3">
    <citation type="journal article" date="1996" name="Yeast">
        <title>Sequence analysis of a 40.7 kb segment from the left arm of yeast chromosome X reveals 14 known genes and 13 new open reading frames including homologues of genes clustered on the right arm of chromosome XI.</title>
        <authorList>
            <person name="Katsoulou C."/>
            <person name="Tzermia M."/>
            <person name="Tavernarakis N."/>
            <person name="Alexandraki D."/>
        </authorList>
    </citation>
    <scope>NUCLEOTIDE SEQUENCE [GENOMIC DNA]</scope>
    <source>
        <strain>ATCC 96604 / S288c / FY1679</strain>
    </source>
</reference>
<reference key="4">
    <citation type="journal article" date="1996" name="EMBO J.">
        <title>Complete nucleotide sequence of Saccharomyces cerevisiae chromosome X.</title>
        <authorList>
            <person name="Galibert F."/>
            <person name="Alexandraki D."/>
            <person name="Baur A."/>
            <person name="Boles E."/>
            <person name="Chalwatzis N."/>
            <person name="Chuat J.-C."/>
            <person name="Coster F."/>
            <person name="Cziepluch C."/>
            <person name="de Haan M."/>
            <person name="Domdey H."/>
            <person name="Durand P."/>
            <person name="Entian K.-D."/>
            <person name="Gatius M."/>
            <person name="Goffeau A."/>
            <person name="Grivell L.A."/>
            <person name="Hennemann A."/>
            <person name="Herbert C.J."/>
            <person name="Heumann K."/>
            <person name="Hilger F."/>
            <person name="Hollenberg C.P."/>
            <person name="Huang M.-E."/>
            <person name="Jacq C."/>
            <person name="Jauniaux J.-C."/>
            <person name="Katsoulou C."/>
            <person name="Kirchrath L."/>
            <person name="Kleine K."/>
            <person name="Kordes E."/>
            <person name="Koetter P."/>
            <person name="Liebl S."/>
            <person name="Louis E.J."/>
            <person name="Manus V."/>
            <person name="Mewes H.-W."/>
            <person name="Miosga T."/>
            <person name="Obermaier B."/>
            <person name="Perea J."/>
            <person name="Pohl T.M."/>
            <person name="Portetelle D."/>
            <person name="Pujol A."/>
            <person name="Purnelle B."/>
            <person name="Ramezani Rad M."/>
            <person name="Rasmussen S.W."/>
            <person name="Rose M."/>
            <person name="Rossau R."/>
            <person name="Schaaff-Gerstenschlaeger I."/>
            <person name="Smits P.H.M."/>
            <person name="Scarcez T."/>
            <person name="Soriano N."/>
            <person name="To Van D."/>
            <person name="Tzermia M."/>
            <person name="Van Broekhoven A."/>
            <person name="Vandenbol M."/>
            <person name="Wedler H."/>
            <person name="von Wettstein D."/>
            <person name="Wambutt R."/>
            <person name="Zagulski M."/>
            <person name="Zollner A."/>
            <person name="Karpfinger-Hartl L."/>
        </authorList>
    </citation>
    <scope>NUCLEOTIDE SEQUENCE [LARGE SCALE GENOMIC DNA]</scope>
    <source>
        <strain>ATCC 204508 / S288c</strain>
    </source>
</reference>
<reference key="5">
    <citation type="journal article" date="2014" name="G3 (Bethesda)">
        <title>The reference genome sequence of Saccharomyces cerevisiae: Then and now.</title>
        <authorList>
            <person name="Engel S.R."/>
            <person name="Dietrich F.S."/>
            <person name="Fisk D.G."/>
            <person name="Binkley G."/>
            <person name="Balakrishnan R."/>
            <person name="Costanzo M.C."/>
            <person name="Dwight S.S."/>
            <person name="Hitz B.C."/>
            <person name="Karra K."/>
            <person name="Nash R.S."/>
            <person name="Weng S."/>
            <person name="Wong E.D."/>
            <person name="Lloyd P."/>
            <person name="Skrzypek M.S."/>
            <person name="Miyasato S.R."/>
            <person name="Simison M."/>
            <person name="Cherry J.M."/>
        </authorList>
    </citation>
    <scope>GENOME REANNOTATION</scope>
    <source>
        <strain>ATCC 204508 / S288c</strain>
    </source>
</reference>
<reference key="6">
    <citation type="journal article" date="2003" name="Nature">
        <title>Global analysis of protein expression in yeast.</title>
        <authorList>
            <person name="Ghaemmaghami S."/>
            <person name="Huh W.-K."/>
            <person name="Bower K."/>
            <person name="Howson R.W."/>
            <person name="Belle A."/>
            <person name="Dephoure N."/>
            <person name="O'Shea E.K."/>
            <person name="Weissman J.S."/>
        </authorList>
    </citation>
    <scope>LEVEL OF PROTEIN EXPRESSION [LARGE SCALE ANALYSIS]</scope>
</reference>
<keyword id="KW-0472">Membrane</keyword>
<keyword id="KW-0496">Mitochondrion</keyword>
<keyword id="KW-0999">Mitochondrion inner membrane</keyword>
<keyword id="KW-0507">mRNA processing</keyword>
<keyword id="KW-1185">Reference proteome</keyword>
<keyword id="KW-0677">Repeat</keyword>
<keyword id="KW-0812">Transmembrane</keyword>
<keyword id="KW-1133">Transmembrane helix</keyword>
<keyword id="KW-0813">Transport</keyword>
<evidence type="ECO:0000255" key="1"/>
<evidence type="ECO:0000269" key="2">
    <source>
    </source>
</evidence>
<evidence type="ECO:0000305" key="3"/>